<accession>A6LSJ2</accession>
<reference key="1">
    <citation type="submission" date="2007-06" db="EMBL/GenBank/DDBJ databases">
        <title>Complete sequence of Clostridium beijerinckii NCIMB 8052.</title>
        <authorList>
            <consortium name="US DOE Joint Genome Institute"/>
            <person name="Copeland A."/>
            <person name="Lucas S."/>
            <person name="Lapidus A."/>
            <person name="Barry K."/>
            <person name="Detter J.C."/>
            <person name="Glavina del Rio T."/>
            <person name="Hammon N."/>
            <person name="Israni S."/>
            <person name="Dalin E."/>
            <person name="Tice H."/>
            <person name="Pitluck S."/>
            <person name="Sims D."/>
            <person name="Brettin T."/>
            <person name="Bruce D."/>
            <person name="Tapia R."/>
            <person name="Brainard J."/>
            <person name="Schmutz J."/>
            <person name="Larimer F."/>
            <person name="Land M."/>
            <person name="Hauser L."/>
            <person name="Kyrpides N."/>
            <person name="Mikhailova N."/>
            <person name="Bennet G."/>
            <person name="Cann I."/>
            <person name="Chen J.-S."/>
            <person name="Contreras A.L."/>
            <person name="Jones D."/>
            <person name="Kashket E."/>
            <person name="Mitchell W."/>
            <person name="Stoddard S."/>
            <person name="Schwarz W."/>
            <person name="Qureshi N."/>
            <person name="Young M."/>
            <person name="Shi Z."/>
            <person name="Ezeji T."/>
            <person name="White B."/>
            <person name="Blaschek H."/>
            <person name="Richardson P."/>
        </authorList>
    </citation>
    <scope>NUCLEOTIDE SEQUENCE [LARGE SCALE GENOMIC DNA]</scope>
    <source>
        <strain>ATCC 51743 / NCIMB 8052</strain>
    </source>
</reference>
<dbReference type="EMBL" id="CP000721">
    <property type="protein sequence ID" value="ABR33322.1"/>
    <property type="molecule type" value="Genomic_DNA"/>
</dbReference>
<dbReference type="SMR" id="A6LSJ2"/>
<dbReference type="KEGG" id="cbe:Cbei_1140"/>
<dbReference type="eggNOG" id="COG2052">
    <property type="taxonomic scope" value="Bacteria"/>
</dbReference>
<dbReference type="HOGENOM" id="CLU_165326_0_0_9"/>
<dbReference type="Proteomes" id="UP000000565">
    <property type="component" value="Chromosome"/>
</dbReference>
<dbReference type="HAMAP" id="MF_01503">
    <property type="entry name" value="RemA"/>
    <property type="match status" value="1"/>
</dbReference>
<dbReference type="InterPro" id="IPR007169">
    <property type="entry name" value="RemA-like"/>
</dbReference>
<dbReference type="NCBIfam" id="NF046064">
    <property type="entry name" value="MtxBflmRegRemA"/>
    <property type="match status" value="1"/>
</dbReference>
<dbReference type="NCBIfam" id="NF003315">
    <property type="entry name" value="PRK04323.1"/>
    <property type="match status" value="1"/>
</dbReference>
<dbReference type="PANTHER" id="PTHR38449:SF1">
    <property type="entry name" value="REGULATORY PROTEIN SSL2874-RELATED"/>
    <property type="match status" value="1"/>
</dbReference>
<dbReference type="PANTHER" id="PTHR38449">
    <property type="entry name" value="REGULATORY PROTEIN TM_1690-RELATED"/>
    <property type="match status" value="1"/>
</dbReference>
<dbReference type="Pfam" id="PF04025">
    <property type="entry name" value="RemA-like"/>
    <property type="match status" value="1"/>
</dbReference>
<evidence type="ECO:0000255" key="1">
    <source>
        <dbReference type="HAMAP-Rule" id="MF_01503"/>
    </source>
</evidence>
<organism>
    <name type="scientific">Clostridium beijerinckii (strain ATCC 51743 / NCIMB 8052)</name>
    <name type="common">Clostridium acetobutylicum</name>
    <dbReference type="NCBI Taxonomy" id="290402"/>
    <lineage>
        <taxon>Bacteria</taxon>
        <taxon>Bacillati</taxon>
        <taxon>Bacillota</taxon>
        <taxon>Clostridia</taxon>
        <taxon>Eubacteriales</taxon>
        <taxon>Clostridiaceae</taxon>
        <taxon>Clostridium</taxon>
    </lineage>
</organism>
<comment type="similarity">
    <text evidence="1">Belongs to the RemA family.</text>
</comment>
<gene>
    <name type="ordered locus">Cbei_1140</name>
</gene>
<feature type="chain" id="PRO_1000087510" description="Putative regulatory protein Cbei_1140">
    <location>
        <begin position="1"/>
        <end position="90"/>
    </location>
</feature>
<proteinExistence type="inferred from homology"/>
<protein>
    <recommendedName>
        <fullName evidence="1">Putative regulatory protein Cbei_1140</fullName>
    </recommendedName>
</protein>
<name>Y1140_CLOB8</name>
<sequence length="90" mass="9871">MGIKLINIGFGNIVSANRLVAIVSPESAPIKRIIQEARDRGMLIDATYGRRTRAVIITDSDHVILSAVQPETVAHRLSTKDDMAVDEDDE</sequence>